<feature type="chain" id="PRO_0000300611" description="UPF0354 protein SAUSA300_1689">
    <location>
        <begin position="1"/>
        <end position="285"/>
    </location>
</feature>
<comment type="similarity">
    <text evidence="1">Belongs to the UPF0354 family.</text>
</comment>
<organism>
    <name type="scientific">Staphylococcus aureus (strain USA300)</name>
    <dbReference type="NCBI Taxonomy" id="367830"/>
    <lineage>
        <taxon>Bacteria</taxon>
        <taxon>Bacillati</taxon>
        <taxon>Bacillota</taxon>
        <taxon>Bacilli</taxon>
        <taxon>Bacillales</taxon>
        <taxon>Staphylococcaceae</taxon>
        <taxon>Staphylococcus</taxon>
    </lineage>
</organism>
<accession>Q2FFZ5</accession>
<name>Y1689_STAA3</name>
<proteinExistence type="inferred from homology"/>
<reference key="1">
    <citation type="journal article" date="2006" name="Lancet">
        <title>Complete genome sequence of USA300, an epidemic clone of community-acquired meticillin-resistant Staphylococcus aureus.</title>
        <authorList>
            <person name="Diep B.A."/>
            <person name="Gill S.R."/>
            <person name="Chang R.F."/>
            <person name="Phan T.H."/>
            <person name="Chen J.H."/>
            <person name="Davidson M.G."/>
            <person name="Lin F."/>
            <person name="Lin J."/>
            <person name="Carleton H.A."/>
            <person name="Mongodin E.F."/>
            <person name="Sensabaugh G.F."/>
            <person name="Perdreau-Remington F."/>
        </authorList>
    </citation>
    <scope>NUCLEOTIDE SEQUENCE [LARGE SCALE GENOMIC DNA]</scope>
    <source>
        <strain>USA300</strain>
    </source>
</reference>
<protein>
    <recommendedName>
        <fullName evidence="1">UPF0354 protein SAUSA300_1689</fullName>
    </recommendedName>
</protein>
<gene>
    <name type="ordered locus">SAUSA300_1689</name>
</gene>
<sequence>MNTFQMRDKLKERLSHLDVDFKFNREEETLRIYRTDNNKGITIKLNAIVAKYEDKKEKIVDEIVYYVDEAIAQMADKTLESISSSQIMPVIRATSFDKKTKQGVPFIYDEHTAETAVYYAVDLGKSYRLIDESMLEDLKLTEQQIREMSLFNVRKLSNSYTTDEVKGNIFYFINSNDGYDASRILNTAFLNEIEAQCQGEMLVAVPHQDVLIIADIRNKTGYDVMAHLTMEFFTKGLVPITSLSFGYKQGHLEPIFILGKNNKQKRDPNVIQRLEANRRKFNKDK</sequence>
<evidence type="ECO:0000255" key="1">
    <source>
        <dbReference type="HAMAP-Rule" id="MF_01548"/>
    </source>
</evidence>
<dbReference type="EMBL" id="CP000255">
    <property type="protein sequence ID" value="ABD21451.1"/>
    <property type="molecule type" value="Genomic_DNA"/>
</dbReference>
<dbReference type="RefSeq" id="WP_001091387.1">
    <property type="nucleotide sequence ID" value="NZ_CP027476.1"/>
</dbReference>
<dbReference type="KEGG" id="saa:SAUSA300_1689"/>
<dbReference type="HOGENOM" id="CLU_085634_0_0_9"/>
<dbReference type="Proteomes" id="UP000001939">
    <property type="component" value="Chromosome"/>
</dbReference>
<dbReference type="HAMAP" id="MF_01548">
    <property type="entry name" value="UPF0354"/>
    <property type="match status" value="1"/>
</dbReference>
<dbReference type="InterPro" id="IPR010838">
    <property type="entry name" value="DUF1444"/>
</dbReference>
<dbReference type="NCBIfam" id="NF010189">
    <property type="entry name" value="PRK13668.1"/>
    <property type="match status" value="1"/>
</dbReference>
<dbReference type="Pfam" id="PF07285">
    <property type="entry name" value="DUF1444"/>
    <property type="match status" value="1"/>
</dbReference>
<dbReference type="PIRSF" id="PIRSF012562">
    <property type="entry name" value="UCP012562"/>
    <property type="match status" value="1"/>
</dbReference>